<comment type="function">
    <text evidence="2">Binds with high affinity to muscular (alpha-1/CHRNA1) and neuronal (alpha-7/CHRNA7) nicotinic acetylcholine receptor (nAChR) and inhibits acetylcholine from binding to the receptor, thereby impairing neuromuscular and neuronal transmission.</text>
</comment>
<comment type="subcellular location">
    <subcellularLocation>
        <location evidence="1">Secreted</location>
    </subcellularLocation>
</comment>
<comment type="tissue specificity">
    <text evidence="4">Expressed by the venom gland.</text>
</comment>
<comment type="similarity">
    <text evidence="4">Belongs to the three-finger toxin family. Long-chain subfamily. Type II alpha-neurotoxin sub-subfamily.</text>
</comment>
<feature type="signal peptide" evidence="3">
    <location>
        <begin position="1"/>
        <end position="21"/>
    </location>
</feature>
<feature type="chain" id="PRO_0000316165" description="Alpha-elapitoxin-Lh2a">
    <location>
        <begin position="22"/>
        <end position="92"/>
    </location>
</feature>
<feature type="disulfide bond" evidence="1">
    <location>
        <begin position="24"/>
        <end position="41"/>
    </location>
</feature>
<feature type="disulfide bond" evidence="1">
    <location>
        <begin position="34"/>
        <end position="62"/>
    </location>
</feature>
<feature type="disulfide bond" evidence="1">
    <location>
        <begin position="47"/>
        <end position="51"/>
    </location>
</feature>
<feature type="disulfide bond" evidence="1">
    <location>
        <begin position="66"/>
        <end position="77"/>
    </location>
</feature>
<feature type="disulfide bond" evidence="1">
    <location>
        <begin position="78"/>
        <end position="83"/>
    </location>
</feature>
<dbReference type="EMBL" id="AF159538">
    <property type="protein sequence ID" value="AAL54893.1"/>
    <property type="molecule type" value="mRNA"/>
</dbReference>
<dbReference type="SMR" id="Q8UW28"/>
<dbReference type="GO" id="GO:0005576">
    <property type="term" value="C:extracellular region"/>
    <property type="evidence" value="ECO:0007669"/>
    <property type="project" value="UniProtKB-SubCell"/>
</dbReference>
<dbReference type="GO" id="GO:0030550">
    <property type="term" value="F:acetylcholine receptor inhibitor activity"/>
    <property type="evidence" value="ECO:0007669"/>
    <property type="project" value="UniProtKB-KW"/>
</dbReference>
<dbReference type="GO" id="GO:0099106">
    <property type="term" value="F:ion channel regulator activity"/>
    <property type="evidence" value="ECO:0007669"/>
    <property type="project" value="UniProtKB-KW"/>
</dbReference>
<dbReference type="GO" id="GO:0090729">
    <property type="term" value="F:toxin activity"/>
    <property type="evidence" value="ECO:0007669"/>
    <property type="project" value="UniProtKB-KW"/>
</dbReference>
<dbReference type="CDD" id="cd00206">
    <property type="entry name" value="TFP_snake_toxin"/>
    <property type="match status" value="1"/>
</dbReference>
<dbReference type="Gene3D" id="2.10.60.10">
    <property type="entry name" value="CD59"/>
    <property type="match status" value="1"/>
</dbReference>
<dbReference type="InterPro" id="IPR003571">
    <property type="entry name" value="Snake_3FTx"/>
</dbReference>
<dbReference type="InterPro" id="IPR045860">
    <property type="entry name" value="Snake_toxin-like_sf"/>
</dbReference>
<dbReference type="InterPro" id="IPR018354">
    <property type="entry name" value="Snake_toxin_con_site"/>
</dbReference>
<dbReference type="InterPro" id="IPR054131">
    <property type="entry name" value="Toxin_cobra-type"/>
</dbReference>
<dbReference type="Pfam" id="PF21947">
    <property type="entry name" value="Toxin_cobra-type"/>
    <property type="match status" value="1"/>
</dbReference>
<dbReference type="SUPFAM" id="SSF57302">
    <property type="entry name" value="Snake toxin-like"/>
    <property type="match status" value="1"/>
</dbReference>
<dbReference type="PROSITE" id="PS00272">
    <property type="entry name" value="SNAKE_TOXIN"/>
    <property type="match status" value="1"/>
</dbReference>
<accession>Q8UW28</accession>
<sequence>MKTLLLTLVVVTIVCLDLGDSLSCYLGYKRSQTCPPGEKVCFVKSWCDAFCGSRGKRIEMGCAATCPTVKDGIDITCCATDNCNTYANWGSG</sequence>
<reference key="1">
    <citation type="submission" date="1999-06" db="EMBL/GenBank/DDBJ databases">
        <title>A novel long neurotoxin cDNA from sea snake.</title>
        <authorList>
            <person name="Wei J.W."/>
            <person name="Zhong X.F."/>
            <person name="Zhao G."/>
            <person name="Yang W."/>
            <person name="Xu A.L."/>
        </authorList>
    </citation>
    <scope>NUCLEOTIDE SEQUENCE [MRNA]</scope>
</reference>
<organism>
    <name type="scientific">Hydrophis hardwickii</name>
    <name type="common">Hardwick's spine-bellied seasnake</name>
    <name type="synonym">Lapemis hardwickii</name>
    <dbReference type="NCBI Taxonomy" id="8781"/>
    <lineage>
        <taxon>Eukaryota</taxon>
        <taxon>Metazoa</taxon>
        <taxon>Chordata</taxon>
        <taxon>Craniata</taxon>
        <taxon>Vertebrata</taxon>
        <taxon>Euteleostomi</taxon>
        <taxon>Lepidosauria</taxon>
        <taxon>Squamata</taxon>
        <taxon>Bifurcata</taxon>
        <taxon>Unidentata</taxon>
        <taxon>Episquamata</taxon>
        <taxon>Toxicofera</taxon>
        <taxon>Serpentes</taxon>
        <taxon>Colubroidea</taxon>
        <taxon>Elapidae</taxon>
        <taxon>Hydrophiinae</taxon>
        <taxon>Hydrophis</taxon>
    </lineage>
</organism>
<protein>
    <recommendedName>
        <fullName>Alpha-elapitoxin-Lh2a</fullName>
        <shortName>Alpha-EPTX-Lh2a</shortName>
    </recommendedName>
    <alternativeName>
        <fullName>Long neurotoxin 3</fullName>
    </alternativeName>
</protein>
<name>3L23_HYDHA</name>
<keyword id="KW-0008">Acetylcholine receptor inhibiting toxin</keyword>
<keyword id="KW-1015">Disulfide bond</keyword>
<keyword id="KW-0872">Ion channel impairing toxin</keyword>
<keyword id="KW-0528">Neurotoxin</keyword>
<keyword id="KW-0629">Postsynaptic neurotoxin</keyword>
<keyword id="KW-0964">Secreted</keyword>
<keyword id="KW-0732">Signal</keyword>
<keyword id="KW-0800">Toxin</keyword>
<proteinExistence type="inferred from homology"/>
<evidence type="ECO:0000250" key="1"/>
<evidence type="ECO:0000250" key="2">
    <source>
        <dbReference type="UniProtKB" id="P60615"/>
    </source>
</evidence>
<evidence type="ECO:0000255" key="3"/>
<evidence type="ECO:0000305" key="4"/>